<accession>Q9ZV85</accession>
<accession>Q8LA07</accession>
<reference key="1">
    <citation type="journal article" date="2000" name="Nature">
        <title>Sequence and analysis of chromosome 1 of the plant Arabidopsis thaliana.</title>
        <authorList>
            <person name="Theologis A."/>
            <person name="Ecker J.R."/>
            <person name="Palm C.J."/>
            <person name="Federspiel N.A."/>
            <person name="Kaul S."/>
            <person name="White O."/>
            <person name="Alonso J."/>
            <person name="Altafi H."/>
            <person name="Araujo R."/>
            <person name="Bowman C.L."/>
            <person name="Brooks S.Y."/>
            <person name="Buehler E."/>
            <person name="Chan A."/>
            <person name="Chao Q."/>
            <person name="Chen H."/>
            <person name="Cheuk R.F."/>
            <person name="Chin C.W."/>
            <person name="Chung M.K."/>
            <person name="Conn L."/>
            <person name="Conway A.B."/>
            <person name="Conway A.R."/>
            <person name="Creasy T.H."/>
            <person name="Dewar K."/>
            <person name="Dunn P."/>
            <person name="Etgu P."/>
            <person name="Feldblyum T.V."/>
            <person name="Feng J.-D."/>
            <person name="Fong B."/>
            <person name="Fujii C.Y."/>
            <person name="Gill J.E."/>
            <person name="Goldsmith A.D."/>
            <person name="Haas B."/>
            <person name="Hansen N.F."/>
            <person name="Hughes B."/>
            <person name="Huizar L."/>
            <person name="Hunter J.L."/>
            <person name="Jenkins J."/>
            <person name="Johnson-Hopson C."/>
            <person name="Khan S."/>
            <person name="Khaykin E."/>
            <person name="Kim C.J."/>
            <person name="Koo H.L."/>
            <person name="Kremenetskaia I."/>
            <person name="Kurtz D.B."/>
            <person name="Kwan A."/>
            <person name="Lam B."/>
            <person name="Langin-Hooper S."/>
            <person name="Lee A."/>
            <person name="Lee J.M."/>
            <person name="Lenz C.A."/>
            <person name="Li J.H."/>
            <person name="Li Y.-P."/>
            <person name="Lin X."/>
            <person name="Liu S.X."/>
            <person name="Liu Z.A."/>
            <person name="Luros J.S."/>
            <person name="Maiti R."/>
            <person name="Marziali A."/>
            <person name="Militscher J."/>
            <person name="Miranda M."/>
            <person name="Nguyen M."/>
            <person name="Nierman W.C."/>
            <person name="Osborne B.I."/>
            <person name="Pai G."/>
            <person name="Peterson J."/>
            <person name="Pham P.K."/>
            <person name="Rizzo M."/>
            <person name="Rooney T."/>
            <person name="Rowley D."/>
            <person name="Sakano H."/>
            <person name="Salzberg S.L."/>
            <person name="Schwartz J.R."/>
            <person name="Shinn P."/>
            <person name="Southwick A.M."/>
            <person name="Sun H."/>
            <person name="Tallon L.J."/>
            <person name="Tambunga G."/>
            <person name="Toriumi M.J."/>
            <person name="Town C.D."/>
            <person name="Utterback T."/>
            <person name="Van Aken S."/>
            <person name="Vaysberg M."/>
            <person name="Vysotskaia V.S."/>
            <person name="Walker M."/>
            <person name="Wu D."/>
            <person name="Yu G."/>
            <person name="Fraser C.M."/>
            <person name="Venter J.C."/>
            <person name="Davis R.W."/>
        </authorList>
    </citation>
    <scope>NUCLEOTIDE SEQUENCE [LARGE SCALE GENOMIC DNA]</scope>
    <source>
        <strain>cv. Columbia</strain>
    </source>
</reference>
<reference key="2">
    <citation type="journal article" date="2017" name="Plant J.">
        <title>Araport11: a complete reannotation of the Arabidopsis thaliana reference genome.</title>
        <authorList>
            <person name="Cheng C.Y."/>
            <person name="Krishnakumar V."/>
            <person name="Chan A.P."/>
            <person name="Thibaud-Nissen F."/>
            <person name="Schobel S."/>
            <person name="Town C.D."/>
        </authorList>
    </citation>
    <scope>GENOME REANNOTATION</scope>
    <source>
        <strain>cv. Columbia</strain>
    </source>
</reference>
<reference key="3">
    <citation type="journal article" date="2003" name="Science">
        <title>Empirical analysis of transcriptional activity in the Arabidopsis genome.</title>
        <authorList>
            <person name="Yamada K."/>
            <person name="Lim J."/>
            <person name="Dale J.M."/>
            <person name="Chen H."/>
            <person name="Shinn P."/>
            <person name="Palm C.J."/>
            <person name="Southwick A.M."/>
            <person name="Wu H.C."/>
            <person name="Kim C.J."/>
            <person name="Nguyen M."/>
            <person name="Pham P.K."/>
            <person name="Cheuk R.F."/>
            <person name="Karlin-Newmann G."/>
            <person name="Liu S.X."/>
            <person name="Lam B."/>
            <person name="Sakano H."/>
            <person name="Wu T."/>
            <person name="Yu G."/>
            <person name="Miranda M."/>
            <person name="Quach H.L."/>
            <person name="Tripp M."/>
            <person name="Chang C.H."/>
            <person name="Lee J.M."/>
            <person name="Toriumi M.J."/>
            <person name="Chan M.M."/>
            <person name="Tang C.C."/>
            <person name="Onodera C.S."/>
            <person name="Deng J.M."/>
            <person name="Akiyama K."/>
            <person name="Ansari Y."/>
            <person name="Arakawa T."/>
            <person name="Banh J."/>
            <person name="Banno F."/>
            <person name="Bowser L."/>
            <person name="Brooks S.Y."/>
            <person name="Carninci P."/>
            <person name="Chao Q."/>
            <person name="Choy N."/>
            <person name="Enju A."/>
            <person name="Goldsmith A.D."/>
            <person name="Gurjal M."/>
            <person name="Hansen N.F."/>
            <person name="Hayashizaki Y."/>
            <person name="Johnson-Hopson C."/>
            <person name="Hsuan V.W."/>
            <person name="Iida K."/>
            <person name="Karnes M."/>
            <person name="Khan S."/>
            <person name="Koesema E."/>
            <person name="Ishida J."/>
            <person name="Jiang P.X."/>
            <person name="Jones T."/>
            <person name="Kawai J."/>
            <person name="Kamiya A."/>
            <person name="Meyers C."/>
            <person name="Nakajima M."/>
            <person name="Narusaka M."/>
            <person name="Seki M."/>
            <person name="Sakurai T."/>
            <person name="Satou M."/>
            <person name="Tamse R."/>
            <person name="Vaysberg M."/>
            <person name="Wallender E.K."/>
            <person name="Wong C."/>
            <person name="Yamamura Y."/>
            <person name="Yuan S."/>
            <person name="Shinozaki K."/>
            <person name="Davis R.W."/>
            <person name="Theologis A."/>
            <person name="Ecker J.R."/>
        </authorList>
    </citation>
    <scope>NUCLEOTIDE SEQUENCE [LARGE SCALE MRNA]</scope>
    <source>
        <strain>cv. Columbia</strain>
    </source>
</reference>
<reference key="4">
    <citation type="submission" date="2002-03" db="EMBL/GenBank/DDBJ databases">
        <title>Full-length cDNA from Arabidopsis thaliana.</title>
        <authorList>
            <person name="Brover V.V."/>
            <person name="Troukhan M.E."/>
            <person name="Alexandrov N.A."/>
            <person name="Lu Y.-P."/>
            <person name="Flavell R.B."/>
            <person name="Feldmann K.A."/>
        </authorList>
    </citation>
    <scope>NUCLEOTIDE SEQUENCE [LARGE SCALE MRNA]</scope>
</reference>
<keyword id="KW-0134">Cell wall</keyword>
<keyword id="KW-0378">Hydrolase</keyword>
<keyword id="KW-1185">Reference proteome</keyword>
<keyword id="KW-0964">Secreted</keyword>
<keyword id="KW-0732">Signal</keyword>
<keyword id="KW-0926">Vacuole</keyword>
<sequence length="352" mass="39882">MWRFCFFLSLLFFDVSAVKSAESIFLPSQIGVEDSRVFESLSLSPVCSAADPNLNYKPVIGILTHPGEGRWDARLHSLKNYAYATNISYIAASYVKLAETGGARVIPLIYNEPEEILFQKLELVNGVIFTGGWAKTGLYYDVVEKIFNKVMEKNDAGEHFPVYAMCLGFEILSMIISQNRDILERFNSVNYASSLQFFKNVNIEATVFQRFPPELLKKLSADCLVMQNHYFGISPDNFQGNPYLSSFFNIVTTSADKDSKTFVSTIRSKRYPVTAFQWHPEKNAFEWGSSEIPHSEDAIQVTQHAANYLVSEARKSMNRPSSEKVLSNLIYNYKPTYSGYKGSGDDEVYIFT</sequence>
<organism>
    <name type="scientific">Arabidopsis thaliana</name>
    <name type="common">Mouse-ear cress</name>
    <dbReference type="NCBI Taxonomy" id="3702"/>
    <lineage>
        <taxon>Eukaryota</taxon>
        <taxon>Viridiplantae</taxon>
        <taxon>Streptophyta</taxon>
        <taxon>Embryophyta</taxon>
        <taxon>Tracheophyta</taxon>
        <taxon>Spermatophyta</taxon>
        <taxon>Magnoliopsida</taxon>
        <taxon>eudicotyledons</taxon>
        <taxon>Gunneridae</taxon>
        <taxon>Pentapetalae</taxon>
        <taxon>rosids</taxon>
        <taxon>malvids</taxon>
        <taxon>Brassicales</taxon>
        <taxon>Brassicaceae</taxon>
        <taxon>Camelineae</taxon>
        <taxon>Arabidopsis</taxon>
    </lineage>
</organism>
<feature type="signal peptide" evidence="2">
    <location>
        <begin position="1"/>
        <end position="19"/>
    </location>
</feature>
<feature type="chain" id="PRO_0000423722" description="Probable gamma-glutamyl hydrolase 3">
    <location>
        <begin position="20"/>
        <end position="352"/>
    </location>
</feature>
<feature type="domain" description="Gamma-glutamyl hydrolase" evidence="3">
    <location>
        <begin position="49"/>
        <end position="352"/>
    </location>
</feature>
<feature type="active site" description="Nucleophile" evidence="3">
    <location>
        <position position="166"/>
    </location>
</feature>
<feature type="active site" evidence="3">
    <location>
        <position position="279"/>
    </location>
</feature>
<feature type="sequence conflict" description="In Ref. 4; AAM65646." evidence="4" ref="4">
    <original>L</original>
    <variation>I</variation>
    <location>
        <position position="8"/>
    </location>
</feature>
<protein>
    <recommendedName>
        <fullName>Probable gamma-glutamyl hydrolase 3</fullName>
        <shortName>AtGGH3</shortName>
        <ecNumber>3.4.19.9</ecNumber>
    </recommendedName>
    <alternativeName>
        <fullName>Conjugase</fullName>
    </alternativeName>
    <alternativeName>
        <fullName>GH</fullName>
    </alternativeName>
    <alternativeName>
        <fullName>Gamma-Glu-X carboxypeptidase</fullName>
    </alternativeName>
</protein>
<proteinExistence type="evidence at transcript level"/>
<evidence type="ECO:0000250" key="1"/>
<evidence type="ECO:0000255" key="2"/>
<evidence type="ECO:0000255" key="3">
    <source>
        <dbReference type="PROSITE-ProRule" id="PRU00607"/>
    </source>
</evidence>
<evidence type="ECO:0000305" key="4"/>
<name>GGH3_ARATH</name>
<dbReference type="EC" id="3.4.19.9"/>
<dbReference type="EMBL" id="AC005679">
    <property type="protein sequence ID" value="AAC83042.1"/>
    <property type="molecule type" value="Genomic_DNA"/>
</dbReference>
<dbReference type="EMBL" id="CP002684">
    <property type="protein sequence ID" value="AEE36136.1"/>
    <property type="molecule type" value="Genomic_DNA"/>
</dbReference>
<dbReference type="EMBL" id="AF389281">
    <property type="protein sequence ID" value="AAK63854.1"/>
    <property type="molecule type" value="mRNA"/>
</dbReference>
<dbReference type="EMBL" id="BT000554">
    <property type="protein sequence ID" value="AAN18123.1"/>
    <property type="molecule type" value="mRNA"/>
</dbReference>
<dbReference type="EMBL" id="AY088100">
    <property type="protein sequence ID" value="AAM65646.1"/>
    <property type="molecule type" value="mRNA"/>
</dbReference>
<dbReference type="PIR" id="E96815">
    <property type="entry name" value="E96815"/>
</dbReference>
<dbReference type="RefSeq" id="NP_177988.1">
    <property type="nucleotide sequence ID" value="NM_106514.4"/>
</dbReference>
<dbReference type="SMR" id="Q9ZV85"/>
<dbReference type="BioGRID" id="29422">
    <property type="interactions" value="1"/>
</dbReference>
<dbReference type="FunCoup" id="Q9ZV85">
    <property type="interactions" value="938"/>
</dbReference>
<dbReference type="STRING" id="3702.Q9ZV85"/>
<dbReference type="MEROPS" id="C26.A01"/>
<dbReference type="PaxDb" id="3702-AT1G78670.1"/>
<dbReference type="ProteomicsDB" id="221837"/>
<dbReference type="EnsemblPlants" id="AT1G78670.1">
    <property type="protein sequence ID" value="AT1G78670.1"/>
    <property type="gene ID" value="AT1G78670"/>
</dbReference>
<dbReference type="GeneID" id="844203"/>
<dbReference type="Gramene" id="AT1G78670.1">
    <property type="protein sequence ID" value="AT1G78670.1"/>
    <property type="gene ID" value="AT1G78670"/>
</dbReference>
<dbReference type="KEGG" id="ath:AT1G78670"/>
<dbReference type="Araport" id="AT1G78670"/>
<dbReference type="TAIR" id="AT1G78670">
    <property type="gene designation" value="GGH3"/>
</dbReference>
<dbReference type="eggNOG" id="KOG1559">
    <property type="taxonomic scope" value="Eukaryota"/>
</dbReference>
<dbReference type="HOGENOM" id="CLU_058704_0_0_1"/>
<dbReference type="InParanoid" id="Q9ZV85"/>
<dbReference type="OMA" id="NRFQWDR"/>
<dbReference type="PRO" id="PR:Q9ZV85"/>
<dbReference type="Proteomes" id="UP000006548">
    <property type="component" value="Chromosome 1"/>
</dbReference>
<dbReference type="ExpressionAtlas" id="Q9ZV85">
    <property type="expression patterns" value="baseline and differential"/>
</dbReference>
<dbReference type="GO" id="GO:0005576">
    <property type="term" value="C:extracellular region"/>
    <property type="evidence" value="ECO:0007669"/>
    <property type="project" value="UniProtKB-SubCell"/>
</dbReference>
<dbReference type="GO" id="GO:0000325">
    <property type="term" value="C:plant-type vacuole"/>
    <property type="evidence" value="ECO:0007005"/>
    <property type="project" value="TAIR"/>
</dbReference>
<dbReference type="GO" id="GO:0034722">
    <property type="term" value="F:gamma-glutamyl-peptidase activity"/>
    <property type="evidence" value="ECO:0007669"/>
    <property type="project" value="UniProtKB-EC"/>
</dbReference>
<dbReference type="FunFam" id="3.40.50.880:FF:000024">
    <property type="entry name" value="Folate gamma-glutamyl hydrolase"/>
    <property type="match status" value="1"/>
</dbReference>
<dbReference type="Gene3D" id="3.40.50.880">
    <property type="match status" value="1"/>
</dbReference>
<dbReference type="InterPro" id="IPR029062">
    <property type="entry name" value="Class_I_gatase-like"/>
</dbReference>
<dbReference type="InterPro" id="IPR015527">
    <property type="entry name" value="Pept_C26_g-glut_hydrolase"/>
</dbReference>
<dbReference type="InterPro" id="IPR011697">
    <property type="entry name" value="Peptidase_C26"/>
</dbReference>
<dbReference type="PANTHER" id="PTHR11315:SF13">
    <property type="entry name" value="GAMMA-GLUTAMYL HYDROLASE 3-RELATED"/>
    <property type="match status" value="1"/>
</dbReference>
<dbReference type="PANTHER" id="PTHR11315">
    <property type="entry name" value="PROTEASE FAMILY C26 GAMMA-GLUTAMYL HYDROLASE"/>
    <property type="match status" value="1"/>
</dbReference>
<dbReference type="Pfam" id="PF07722">
    <property type="entry name" value="Peptidase_C26"/>
    <property type="match status" value="1"/>
</dbReference>
<dbReference type="SUPFAM" id="SSF52317">
    <property type="entry name" value="Class I glutamine amidotransferase-like"/>
    <property type="match status" value="1"/>
</dbReference>
<dbReference type="PROSITE" id="PS51275">
    <property type="entry name" value="PEPTIDASE_C26_GGH"/>
    <property type="match status" value="1"/>
</dbReference>
<comment type="function">
    <text evidence="1">Cleaves the polyglutamate sidechains of folate polyglutamates in the vacuole. Is important for polyglutamyl tail length determination before vacuolar exit. Plays a role on folate stability and intracellular folate content (By similarity).</text>
</comment>
<comment type="catalytic activity">
    <reaction>
        <text>(6S)-5,6,7,8-tetrahydrofolyl-(gamma-L-Glu)(n) + (n-1) H2O = (6S)-5,6,7,8-tetrahydrofolate + (n-1) L-glutamate</text>
        <dbReference type="Rhea" id="RHEA:56784"/>
        <dbReference type="Rhea" id="RHEA-COMP:14738"/>
        <dbReference type="ChEBI" id="CHEBI:15377"/>
        <dbReference type="ChEBI" id="CHEBI:29985"/>
        <dbReference type="ChEBI" id="CHEBI:57453"/>
        <dbReference type="ChEBI" id="CHEBI:141005"/>
        <dbReference type="EC" id="3.4.19.9"/>
    </reaction>
</comment>
<comment type="subcellular location">
    <subcellularLocation>
        <location evidence="1">Vacuole</location>
    </subcellularLocation>
    <subcellularLocation>
        <location evidence="1">Secreted</location>
        <location evidence="1">Extracellular space</location>
    </subcellularLocation>
    <subcellularLocation>
        <location evidence="1">Secreted</location>
        <location evidence="1">Cell wall</location>
    </subcellularLocation>
    <text>Extracellular or cell-wall bound.</text>
</comment>
<comment type="similarity">
    <text evidence="4">Belongs to the peptidase C26 family.</text>
</comment>
<gene>
    <name type="primary">GGH3</name>
    <name type="ordered locus">At1g78670</name>
    <name type="ORF">F9K20.29</name>
</gene>